<sequence length="324" mass="36061">MTKSIFEYKDDQDWYLASFGSYNHLTYFGDDEAYEQYVDFFQGLTNTLDVSGFQLHVVKHSSDLRLVSFILDCLKEELGRDLVVTQHQGTLLVSEGDKLLYVHVPREGVSLDGFFGSDNKSDFGDVLLIATRNEGKTKEFRKLFGKLGIKVENLNDYPDLPEVAETGMTFEENARLKAETISKLTGKMVLSDDSGLQVDVLGGLPGVWSARFAGPEATDAENNAKLLHELAMVLDDSKRSAQFHTTLVVAAPGRDSLVVDADWKGYIGREPKGDNGFGYDPLFLVGNTGRTAAELSTEEKNEQSHRGQAVKKLMEVFPAWQNKQ</sequence>
<gene>
    <name type="ordered locus">str0256</name>
</gene>
<reference key="1">
    <citation type="journal article" date="2004" name="Nat. Biotechnol.">
        <title>Complete sequence and comparative genome analysis of the dairy bacterium Streptococcus thermophilus.</title>
        <authorList>
            <person name="Bolotin A."/>
            <person name="Quinquis B."/>
            <person name="Renault P."/>
            <person name="Sorokin A."/>
            <person name="Ehrlich S.D."/>
            <person name="Kulakauskas S."/>
            <person name="Lapidus A."/>
            <person name="Goltsman E."/>
            <person name="Mazur M."/>
            <person name="Pusch G.D."/>
            <person name="Fonstein M."/>
            <person name="Overbeek R."/>
            <person name="Kyprides N."/>
            <person name="Purnelle B."/>
            <person name="Prozzi D."/>
            <person name="Ngui K."/>
            <person name="Masuy D."/>
            <person name="Hancy F."/>
            <person name="Burteau S."/>
            <person name="Boutry M."/>
            <person name="Delcour J."/>
            <person name="Goffeau A."/>
            <person name="Hols P."/>
        </authorList>
    </citation>
    <scope>NUCLEOTIDE SEQUENCE [LARGE SCALE GENOMIC DNA]</scope>
    <source>
        <strain>CNRZ 1066</strain>
    </source>
</reference>
<comment type="function">
    <text evidence="1">Pyrophosphatase that catalyzes the hydrolysis of nucleoside triphosphates to their monophosphate derivatives, with a high preference for the non-canonical purine nucleotides XTP (xanthosine triphosphate), dITP (deoxyinosine triphosphate) and ITP. Seems to function as a house-cleaning enzyme that removes non-canonical purine nucleotides from the nucleotide pool, thus preventing their incorporation into DNA/RNA and avoiding chromosomal lesions.</text>
</comment>
<comment type="catalytic activity">
    <reaction evidence="1">
        <text>XTP + H2O = XMP + diphosphate + H(+)</text>
        <dbReference type="Rhea" id="RHEA:28610"/>
        <dbReference type="ChEBI" id="CHEBI:15377"/>
        <dbReference type="ChEBI" id="CHEBI:15378"/>
        <dbReference type="ChEBI" id="CHEBI:33019"/>
        <dbReference type="ChEBI" id="CHEBI:57464"/>
        <dbReference type="ChEBI" id="CHEBI:61314"/>
        <dbReference type="EC" id="3.6.1.66"/>
    </reaction>
</comment>
<comment type="catalytic activity">
    <reaction evidence="1">
        <text>dITP + H2O = dIMP + diphosphate + H(+)</text>
        <dbReference type="Rhea" id="RHEA:28342"/>
        <dbReference type="ChEBI" id="CHEBI:15377"/>
        <dbReference type="ChEBI" id="CHEBI:15378"/>
        <dbReference type="ChEBI" id="CHEBI:33019"/>
        <dbReference type="ChEBI" id="CHEBI:61194"/>
        <dbReference type="ChEBI" id="CHEBI:61382"/>
        <dbReference type="EC" id="3.6.1.66"/>
    </reaction>
</comment>
<comment type="catalytic activity">
    <reaction evidence="1">
        <text>ITP + H2O = IMP + diphosphate + H(+)</text>
        <dbReference type="Rhea" id="RHEA:29399"/>
        <dbReference type="ChEBI" id="CHEBI:15377"/>
        <dbReference type="ChEBI" id="CHEBI:15378"/>
        <dbReference type="ChEBI" id="CHEBI:33019"/>
        <dbReference type="ChEBI" id="CHEBI:58053"/>
        <dbReference type="ChEBI" id="CHEBI:61402"/>
        <dbReference type="EC" id="3.6.1.66"/>
    </reaction>
</comment>
<comment type="cofactor">
    <cofactor evidence="1">
        <name>Mg(2+)</name>
        <dbReference type="ChEBI" id="CHEBI:18420"/>
    </cofactor>
    <text evidence="1">Binds 1 Mg(2+) ion per subunit.</text>
</comment>
<comment type="subunit">
    <text evidence="1">Homodimer.</text>
</comment>
<comment type="similarity">
    <text evidence="1 2">Belongs to the HAM1 NTPase family.</text>
</comment>
<evidence type="ECO:0000255" key="1">
    <source>
        <dbReference type="HAMAP-Rule" id="MF_01405"/>
    </source>
</evidence>
<evidence type="ECO:0000305" key="2"/>
<proteinExistence type="inferred from homology"/>
<accession>Q5M1I4</accession>
<name>IXTPA_STRT1</name>
<dbReference type="EC" id="3.6.1.66" evidence="1"/>
<dbReference type="EMBL" id="CP000024">
    <property type="protein sequence ID" value="AAV61869.1"/>
    <property type="molecule type" value="Genomic_DNA"/>
</dbReference>
<dbReference type="RefSeq" id="WP_011226850.1">
    <property type="nucleotide sequence ID" value="NC_006449.1"/>
</dbReference>
<dbReference type="SMR" id="Q5M1I4"/>
<dbReference type="KEGG" id="stc:str0256"/>
<dbReference type="HOGENOM" id="CLU_863088_0_0_9"/>
<dbReference type="GO" id="GO:0005829">
    <property type="term" value="C:cytosol"/>
    <property type="evidence" value="ECO:0007669"/>
    <property type="project" value="TreeGrafter"/>
</dbReference>
<dbReference type="GO" id="GO:0035870">
    <property type="term" value="F:dITP diphosphatase activity"/>
    <property type="evidence" value="ECO:0007669"/>
    <property type="project" value="RHEA"/>
</dbReference>
<dbReference type="GO" id="GO:0036220">
    <property type="term" value="F:ITP diphosphatase activity"/>
    <property type="evidence" value="ECO:0007669"/>
    <property type="project" value="UniProtKB-EC"/>
</dbReference>
<dbReference type="GO" id="GO:0046872">
    <property type="term" value="F:metal ion binding"/>
    <property type="evidence" value="ECO:0007669"/>
    <property type="project" value="UniProtKB-KW"/>
</dbReference>
<dbReference type="GO" id="GO:0000166">
    <property type="term" value="F:nucleotide binding"/>
    <property type="evidence" value="ECO:0007669"/>
    <property type="project" value="UniProtKB-KW"/>
</dbReference>
<dbReference type="GO" id="GO:0017111">
    <property type="term" value="F:ribonucleoside triphosphate phosphatase activity"/>
    <property type="evidence" value="ECO:0007669"/>
    <property type="project" value="InterPro"/>
</dbReference>
<dbReference type="GO" id="GO:0036222">
    <property type="term" value="F:XTP diphosphatase activity"/>
    <property type="evidence" value="ECO:0007669"/>
    <property type="project" value="RHEA"/>
</dbReference>
<dbReference type="GO" id="GO:0009117">
    <property type="term" value="P:nucleotide metabolic process"/>
    <property type="evidence" value="ECO:0007669"/>
    <property type="project" value="UniProtKB-KW"/>
</dbReference>
<dbReference type="GO" id="GO:0009146">
    <property type="term" value="P:purine nucleoside triphosphate catabolic process"/>
    <property type="evidence" value="ECO:0007669"/>
    <property type="project" value="UniProtKB-UniRule"/>
</dbReference>
<dbReference type="CDD" id="cd00515">
    <property type="entry name" value="HAM1"/>
    <property type="match status" value="1"/>
</dbReference>
<dbReference type="FunFam" id="3.90.950.10:FF:000001">
    <property type="entry name" value="dITP/XTP pyrophosphatase"/>
    <property type="match status" value="1"/>
</dbReference>
<dbReference type="Gene3D" id="3.90.950.10">
    <property type="match status" value="1"/>
</dbReference>
<dbReference type="HAMAP" id="MF_01405">
    <property type="entry name" value="Non_canon_purine_NTPase"/>
    <property type="match status" value="1"/>
</dbReference>
<dbReference type="InterPro" id="IPR020922">
    <property type="entry name" value="dITP/XTP_pyrophosphatase"/>
</dbReference>
<dbReference type="InterPro" id="IPR029001">
    <property type="entry name" value="ITPase-like_fam"/>
</dbReference>
<dbReference type="InterPro" id="IPR002637">
    <property type="entry name" value="RdgB/HAM1"/>
</dbReference>
<dbReference type="NCBIfam" id="NF002698">
    <property type="entry name" value="PRK02491.1"/>
    <property type="match status" value="1"/>
</dbReference>
<dbReference type="NCBIfam" id="NF011397">
    <property type="entry name" value="PRK14822.1"/>
    <property type="match status" value="1"/>
</dbReference>
<dbReference type="NCBIfam" id="TIGR00042">
    <property type="entry name" value="RdgB/HAM1 family non-canonical purine NTP pyrophosphatase"/>
    <property type="match status" value="1"/>
</dbReference>
<dbReference type="PANTHER" id="PTHR11067:SF9">
    <property type="entry name" value="INOSINE TRIPHOSPHATE PYROPHOSPHATASE"/>
    <property type="match status" value="1"/>
</dbReference>
<dbReference type="PANTHER" id="PTHR11067">
    <property type="entry name" value="INOSINE TRIPHOSPHATE PYROPHOSPHATASE/HAM1 PROTEIN"/>
    <property type="match status" value="1"/>
</dbReference>
<dbReference type="Pfam" id="PF01725">
    <property type="entry name" value="Ham1p_like"/>
    <property type="match status" value="1"/>
</dbReference>
<dbReference type="SUPFAM" id="SSF52972">
    <property type="entry name" value="ITPase-like"/>
    <property type="match status" value="1"/>
</dbReference>
<organism>
    <name type="scientific">Streptococcus thermophilus (strain CNRZ 1066)</name>
    <dbReference type="NCBI Taxonomy" id="299768"/>
    <lineage>
        <taxon>Bacteria</taxon>
        <taxon>Bacillati</taxon>
        <taxon>Bacillota</taxon>
        <taxon>Bacilli</taxon>
        <taxon>Lactobacillales</taxon>
        <taxon>Streptococcaceae</taxon>
        <taxon>Streptococcus</taxon>
    </lineage>
</organism>
<protein>
    <recommendedName>
        <fullName evidence="1">dITP/XTP pyrophosphatase</fullName>
        <ecNumber evidence="1">3.6.1.66</ecNumber>
    </recommendedName>
    <alternativeName>
        <fullName evidence="1">Non-canonical purine NTP pyrophosphatase</fullName>
    </alternativeName>
    <alternativeName>
        <fullName evidence="1">Non-standard purine NTP pyrophosphatase</fullName>
    </alternativeName>
    <alternativeName>
        <fullName evidence="1">Nucleoside-triphosphate diphosphatase</fullName>
    </alternativeName>
    <alternativeName>
        <fullName evidence="1">Nucleoside-triphosphate pyrophosphatase</fullName>
        <shortName evidence="1">NTPase</shortName>
    </alternativeName>
</protein>
<feature type="chain" id="PRO_0000178246" description="dITP/XTP pyrophosphatase">
    <location>
        <begin position="1"/>
        <end position="324"/>
    </location>
</feature>
<feature type="region of interest" description="Unknown">
    <location>
        <begin position="1"/>
        <end position="126"/>
    </location>
</feature>
<feature type="region of interest" description="NTP pyrophosphatase">
    <location>
        <begin position="127"/>
        <end position="324"/>
    </location>
</feature>
<feature type="active site" description="Proton acceptor" evidence="1">
    <location>
        <position position="193"/>
    </location>
</feature>
<feature type="binding site" evidence="1">
    <location>
        <begin position="131"/>
        <end position="136"/>
    </location>
    <ligand>
        <name>substrate</name>
    </ligand>
</feature>
<feature type="binding site" evidence="1">
    <location>
        <position position="193"/>
    </location>
    <ligand>
        <name>Mg(2+)</name>
        <dbReference type="ChEBI" id="CHEBI:18420"/>
    </ligand>
</feature>
<feature type="binding site" evidence="1">
    <location>
        <position position="194"/>
    </location>
    <ligand>
        <name>substrate</name>
    </ligand>
</feature>
<feature type="binding site" evidence="1">
    <location>
        <begin position="277"/>
        <end position="280"/>
    </location>
    <ligand>
        <name>substrate</name>
    </ligand>
</feature>
<feature type="binding site" evidence="1">
    <location>
        <position position="300"/>
    </location>
    <ligand>
        <name>substrate</name>
    </ligand>
</feature>
<feature type="binding site" evidence="1">
    <location>
        <begin position="305"/>
        <end position="306"/>
    </location>
    <ligand>
        <name>substrate</name>
    </ligand>
</feature>
<keyword id="KW-0378">Hydrolase</keyword>
<keyword id="KW-0460">Magnesium</keyword>
<keyword id="KW-0479">Metal-binding</keyword>
<keyword id="KW-0546">Nucleotide metabolism</keyword>
<keyword id="KW-0547">Nucleotide-binding</keyword>